<evidence type="ECO:0000255" key="1">
    <source>
        <dbReference type="HAMAP-Rule" id="MF_00006"/>
    </source>
</evidence>
<comment type="catalytic activity">
    <reaction evidence="1">
        <text>2-(N(omega)-L-arginino)succinate = fumarate + L-arginine</text>
        <dbReference type="Rhea" id="RHEA:24020"/>
        <dbReference type="ChEBI" id="CHEBI:29806"/>
        <dbReference type="ChEBI" id="CHEBI:32682"/>
        <dbReference type="ChEBI" id="CHEBI:57472"/>
        <dbReference type="EC" id="4.3.2.1"/>
    </reaction>
</comment>
<comment type="pathway">
    <text evidence="1">Amino-acid biosynthesis; L-arginine biosynthesis; L-arginine from L-ornithine and carbamoyl phosphate: step 3/3.</text>
</comment>
<comment type="subcellular location">
    <subcellularLocation>
        <location evidence="1">Cytoplasm</location>
    </subcellularLocation>
</comment>
<comment type="similarity">
    <text evidence="1">Belongs to the lyase 1 family. Argininosuccinate lyase subfamily.</text>
</comment>
<accession>Q2G4W0</accession>
<name>ARLY_NOVAD</name>
<gene>
    <name evidence="1" type="primary">argH</name>
    <name type="ordered locus">Saro_2677</name>
</gene>
<organism>
    <name type="scientific">Novosphingobium aromaticivorans (strain ATCC 700278 / DSM 12444 / CCUG 56034 / CIP 105152 / NBRC 16084 / F199)</name>
    <dbReference type="NCBI Taxonomy" id="279238"/>
    <lineage>
        <taxon>Bacteria</taxon>
        <taxon>Pseudomonadati</taxon>
        <taxon>Pseudomonadota</taxon>
        <taxon>Alphaproteobacteria</taxon>
        <taxon>Sphingomonadales</taxon>
        <taxon>Sphingomonadaceae</taxon>
        <taxon>Novosphingobium</taxon>
    </lineage>
</organism>
<sequence length="469" mass="50489">MSGNSGSNQMWGGRFAGGPSAIMREINASIPFDKALWRQDIAASKAHVDMLGAQGIVSAEDAALIASGLDQVAAEYEANGVPENWDLEDIHMTTESRLAELIGPAAGRLHTARSRNDQVATDFRLWVRDAMDQAELGLKQLQVALVSRAGEHAASIMPGFTHLQTAQPVTLGHHLMAYYEMIGRDRSRFADARVRMNRSPLGSAALAGTGFPIDRFRTAEALGFDGPTDNSLDSVSDRDFALDYLMAAAQCSLHLSRLAEEFIIWASQPFGFVTLPDSLSTGSSIMPQKKNPDAAELVRGHSGRIVGCLTALMITMKGLPLAYSKDMQDDKPPVFEAASLLALSIAAMTGMVAEAKFRTDRMRAAAELGYATATDLADWLVRQANIPFREAHHITGSAVKLAESRGIALDQLSIEDLKAIDERIDERVYAALSVEASVAARCSHGGTAPDEVRKRVAQARVALGLEESA</sequence>
<feature type="chain" id="PRO_0000240745" description="Argininosuccinate lyase">
    <location>
        <begin position="1"/>
        <end position="469"/>
    </location>
</feature>
<protein>
    <recommendedName>
        <fullName evidence="1">Argininosuccinate lyase</fullName>
        <shortName evidence="1">ASAL</shortName>
        <ecNumber evidence="1">4.3.2.1</ecNumber>
    </recommendedName>
    <alternativeName>
        <fullName evidence="1">Arginosuccinase</fullName>
    </alternativeName>
</protein>
<dbReference type="EC" id="4.3.2.1" evidence="1"/>
<dbReference type="EMBL" id="CP000248">
    <property type="protein sequence ID" value="ABD27113.1"/>
    <property type="molecule type" value="Genomic_DNA"/>
</dbReference>
<dbReference type="SMR" id="Q2G4W0"/>
<dbReference type="STRING" id="279238.Saro_2677"/>
<dbReference type="KEGG" id="nar:Saro_2677"/>
<dbReference type="eggNOG" id="COG0165">
    <property type="taxonomic scope" value="Bacteria"/>
</dbReference>
<dbReference type="HOGENOM" id="CLU_027272_2_3_5"/>
<dbReference type="UniPathway" id="UPA00068">
    <property type="reaction ID" value="UER00114"/>
</dbReference>
<dbReference type="Proteomes" id="UP000009134">
    <property type="component" value="Chromosome"/>
</dbReference>
<dbReference type="GO" id="GO:0005829">
    <property type="term" value="C:cytosol"/>
    <property type="evidence" value="ECO:0007669"/>
    <property type="project" value="TreeGrafter"/>
</dbReference>
<dbReference type="GO" id="GO:0004056">
    <property type="term" value="F:argininosuccinate lyase activity"/>
    <property type="evidence" value="ECO:0007669"/>
    <property type="project" value="UniProtKB-UniRule"/>
</dbReference>
<dbReference type="GO" id="GO:0042450">
    <property type="term" value="P:arginine biosynthetic process via ornithine"/>
    <property type="evidence" value="ECO:0007669"/>
    <property type="project" value="InterPro"/>
</dbReference>
<dbReference type="GO" id="GO:0006526">
    <property type="term" value="P:L-arginine biosynthetic process"/>
    <property type="evidence" value="ECO:0007669"/>
    <property type="project" value="UniProtKB-UniRule"/>
</dbReference>
<dbReference type="CDD" id="cd01359">
    <property type="entry name" value="Argininosuccinate_lyase"/>
    <property type="match status" value="1"/>
</dbReference>
<dbReference type="FunFam" id="1.10.275.10:FF:000002">
    <property type="entry name" value="Argininosuccinate lyase"/>
    <property type="match status" value="1"/>
</dbReference>
<dbReference type="FunFam" id="1.10.40.30:FF:000001">
    <property type="entry name" value="Argininosuccinate lyase"/>
    <property type="match status" value="1"/>
</dbReference>
<dbReference type="FunFam" id="1.20.200.10:FF:000015">
    <property type="entry name" value="argininosuccinate lyase isoform X2"/>
    <property type="match status" value="1"/>
</dbReference>
<dbReference type="Gene3D" id="1.10.40.30">
    <property type="entry name" value="Fumarase/aspartase (C-terminal domain)"/>
    <property type="match status" value="1"/>
</dbReference>
<dbReference type="Gene3D" id="1.20.200.10">
    <property type="entry name" value="Fumarase/aspartase (Central domain)"/>
    <property type="match status" value="1"/>
</dbReference>
<dbReference type="Gene3D" id="1.10.275.10">
    <property type="entry name" value="Fumarase/aspartase (N-terminal domain)"/>
    <property type="match status" value="1"/>
</dbReference>
<dbReference type="HAMAP" id="MF_00006">
    <property type="entry name" value="Arg_succ_lyase"/>
    <property type="match status" value="1"/>
</dbReference>
<dbReference type="InterPro" id="IPR029419">
    <property type="entry name" value="Arg_succ_lyase_C"/>
</dbReference>
<dbReference type="InterPro" id="IPR009049">
    <property type="entry name" value="Argininosuccinate_lyase"/>
</dbReference>
<dbReference type="InterPro" id="IPR024083">
    <property type="entry name" value="Fumarase/histidase_N"/>
</dbReference>
<dbReference type="InterPro" id="IPR020557">
    <property type="entry name" value="Fumarate_lyase_CS"/>
</dbReference>
<dbReference type="InterPro" id="IPR000362">
    <property type="entry name" value="Fumarate_lyase_fam"/>
</dbReference>
<dbReference type="InterPro" id="IPR022761">
    <property type="entry name" value="Fumarate_lyase_N"/>
</dbReference>
<dbReference type="InterPro" id="IPR008948">
    <property type="entry name" value="L-Aspartase-like"/>
</dbReference>
<dbReference type="NCBIfam" id="TIGR00838">
    <property type="entry name" value="argH"/>
    <property type="match status" value="1"/>
</dbReference>
<dbReference type="PANTHER" id="PTHR43814">
    <property type="entry name" value="ARGININOSUCCINATE LYASE"/>
    <property type="match status" value="1"/>
</dbReference>
<dbReference type="PANTHER" id="PTHR43814:SF1">
    <property type="entry name" value="ARGININOSUCCINATE LYASE"/>
    <property type="match status" value="1"/>
</dbReference>
<dbReference type="Pfam" id="PF14698">
    <property type="entry name" value="ASL_C2"/>
    <property type="match status" value="1"/>
</dbReference>
<dbReference type="Pfam" id="PF00206">
    <property type="entry name" value="Lyase_1"/>
    <property type="match status" value="1"/>
</dbReference>
<dbReference type="PRINTS" id="PR00145">
    <property type="entry name" value="ARGSUCLYASE"/>
</dbReference>
<dbReference type="PRINTS" id="PR00149">
    <property type="entry name" value="FUMRATELYASE"/>
</dbReference>
<dbReference type="SUPFAM" id="SSF48557">
    <property type="entry name" value="L-aspartase-like"/>
    <property type="match status" value="1"/>
</dbReference>
<dbReference type="PROSITE" id="PS00163">
    <property type="entry name" value="FUMARATE_LYASES"/>
    <property type="match status" value="1"/>
</dbReference>
<proteinExistence type="inferred from homology"/>
<reference key="1">
    <citation type="submission" date="2006-01" db="EMBL/GenBank/DDBJ databases">
        <title>Complete sequence of Novosphingobium aromaticivorans DSM 12444.</title>
        <authorList>
            <consortium name="US DOE Joint Genome Institute"/>
            <person name="Copeland A."/>
            <person name="Lucas S."/>
            <person name="Lapidus A."/>
            <person name="Barry K."/>
            <person name="Detter J.C."/>
            <person name="Glavina T."/>
            <person name="Hammon N."/>
            <person name="Israni S."/>
            <person name="Pitluck S."/>
            <person name="Chain P."/>
            <person name="Malfatti S."/>
            <person name="Shin M."/>
            <person name="Vergez L."/>
            <person name="Schmutz J."/>
            <person name="Larimer F."/>
            <person name="Land M."/>
            <person name="Kyrpides N."/>
            <person name="Ivanova N."/>
            <person name="Fredrickson J."/>
            <person name="Balkwill D."/>
            <person name="Romine M.F."/>
            <person name="Richardson P."/>
        </authorList>
    </citation>
    <scope>NUCLEOTIDE SEQUENCE [LARGE SCALE GENOMIC DNA]</scope>
    <source>
        <strain>ATCC 700278 / DSM 12444 / CCUG 56034 / CIP 105152 / NBRC 16084 / F199</strain>
    </source>
</reference>
<keyword id="KW-0028">Amino-acid biosynthesis</keyword>
<keyword id="KW-0055">Arginine biosynthesis</keyword>
<keyword id="KW-0963">Cytoplasm</keyword>
<keyword id="KW-0456">Lyase</keyword>
<keyword id="KW-1185">Reference proteome</keyword>